<sequence>MTAAATANVVTLPASEPAKAVRDTRPLRLITCGSVDDGKSTLIGRLLWDTKAVKEDQAATLQRDSTGKQNDLGLPDFALLLDGLQAEREQGITIDVAYRYFSTDKRSFIVADTPGHEQYTRNMATGASTADLAVLLVDARMGILEQTRRHATIASLLGIKQFVLAINKIDLTNYDRAGFEKISHDFREFALSLGVKQITAIPMSALKGENVVYSGQAAMPWYTGPTLVETLELATVRSAQAVGFRLSVQRVSRPGESFRGYQGTVAGGSVKPGDSVMILPSGMVANVSKIVTFDLVRNAAVAGDAITLVLDRQVDVSRGDMIVAIDSQPQSGLSFDAQIVALQPEGIEPGKRYWLKSGSRRQRVQVQPIAQLELKTGAWAPAQSLWMNAIGKVRLSFDEAAVFDPYDQNRSTGSFILIDPESNNTVAGGMITGKRADLGGIHKDGQRVLLSLPADLADQIMASELFSSRRDETEVRRVTAAQAAEIWANAASDI</sequence>
<evidence type="ECO:0000250" key="1"/>
<evidence type="ECO:0000255" key="2">
    <source>
        <dbReference type="HAMAP-Rule" id="MF_00062"/>
    </source>
</evidence>
<evidence type="ECO:0000305" key="3"/>
<proteinExistence type="inferred from homology"/>
<accession>O33581</accession>
<name>CYSN_RHITR</name>
<dbReference type="EC" id="2.7.7.4" evidence="2"/>
<dbReference type="EMBL" id="AJ001223">
    <property type="protein sequence ID" value="CAA04619.1"/>
    <property type="molecule type" value="Genomic_DNA"/>
</dbReference>
<dbReference type="PIR" id="A58721">
    <property type="entry name" value="A58721"/>
</dbReference>
<dbReference type="SMR" id="O33581"/>
<dbReference type="UniPathway" id="UPA00140">
    <property type="reaction ID" value="UER00204"/>
</dbReference>
<dbReference type="GO" id="GO:0005524">
    <property type="term" value="F:ATP binding"/>
    <property type="evidence" value="ECO:0007669"/>
    <property type="project" value="UniProtKB-KW"/>
</dbReference>
<dbReference type="GO" id="GO:0005525">
    <property type="term" value="F:GTP binding"/>
    <property type="evidence" value="ECO:0007669"/>
    <property type="project" value="UniProtKB-UniRule"/>
</dbReference>
<dbReference type="GO" id="GO:0003924">
    <property type="term" value="F:GTPase activity"/>
    <property type="evidence" value="ECO:0007669"/>
    <property type="project" value="InterPro"/>
</dbReference>
<dbReference type="GO" id="GO:0004781">
    <property type="term" value="F:sulfate adenylyltransferase (ATP) activity"/>
    <property type="evidence" value="ECO:0007669"/>
    <property type="project" value="UniProtKB-UniRule"/>
</dbReference>
<dbReference type="GO" id="GO:0070814">
    <property type="term" value="P:hydrogen sulfide biosynthetic process"/>
    <property type="evidence" value="ECO:0007669"/>
    <property type="project" value="UniProtKB-UniRule"/>
</dbReference>
<dbReference type="GO" id="GO:0000103">
    <property type="term" value="P:sulfate assimilation"/>
    <property type="evidence" value="ECO:0007669"/>
    <property type="project" value="UniProtKB-UniRule"/>
</dbReference>
<dbReference type="CDD" id="cd04166">
    <property type="entry name" value="CysN_ATPS"/>
    <property type="match status" value="1"/>
</dbReference>
<dbReference type="CDD" id="cd03695">
    <property type="entry name" value="CysN_NodQ_II"/>
    <property type="match status" value="1"/>
</dbReference>
<dbReference type="CDD" id="cd04095">
    <property type="entry name" value="CysN_NoDQ_III"/>
    <property type="match status" value="1"/>
</dbReference>
<dbReference type="FunFam" id="3.40.50.300:FF:000119">
    <property type="entry name" value="Sulfate adenylyltransferase subunit 1"/>
    <property type="match status" value="1"/>
</dbReference>
<dbReference type="Gene3D" id="3.40.50.300">
    <property type="entry name" value="P-loop containing nucleotide triphosphate hydrolases"/>
    <property type="match status" value="1"/>
</dbReference>
<dbReference type="Gene3D" id="2.40.30.10">
    <property type="entry name" value="Translation factors"/>
    <property type="match status" value="2"/>
</dbReference>
<dbReference type="HAMAP" id="MF_00062">
    <property type="entry name" value="Sulf_adenylyltr_sub1"/>
    <property type="match status" value="1"/>
</dbReference>
<dbReference type="InterPro" id="IPR041757">
    <property type="entry name" value="CysN_GTP-bd"/>
</dbReference>
<dbReference type="InterPro" id="IPR044138">
    <property type="entry name" value="CysN_II"/>
</dbReference>
<dbReference type="InterPro" id="IPR044139">
    <property type="entry name" value="CysN_NoDQ_III"/>
</dbReference>
<dbReference type="InterPro" id="IPR031157">
    <property type="entry name" value="G_TR_CS"/>
</dbReference>
<dbReference type="InterPro" id="IPR054696">
    <property type="entry name" value="GTP-eEF1A_C"/>
</dbReference>
<dbReference type="InterPro" id="IPR027417">
    <property type="entry name" value="P-loop_NTPase"/>
</dbReference>
<dbReference type="InterPro" id="IPR011779">
    <property type="entry name" value="SO4_adenylTrfase_lsu"/>
</dbReference>
<dbReference type="InterPro" id="IPR000795">
    <property type="entry name" value="T_Tr_GTP-bd_dom"/>
</dbReference>
<dbReference type="InterPro" id="IPR050100">
    <property type="entry name" value="TRAFAC_GTPase_members"/>
</dbReference>
<dbReference type="InterPro" id="IPR009000">
    <property type="entry name" value="Transl_B-barrel_sf"/>
</dbReference>
<dbReference type="InterPro" id="IPR009001">
    <property type="entry name" value="Transl_elong_EF1A/Init_IF2_C"/>
</dbReference>
<dbReference type="NCBIfam" id="TIGR02034">
    <property type="entry name" value="CysN"/>
    <property type="match status" value="1"/>
</dbReference>
<dbReference type="NCBIfam" id="NF003478">
    <property type="entry name" value="PRK05124.1"/>
    <property type="match status" value="1"/>
</dbReference>
<dbReference type="PANTHER" id="PTHR23115">
    <property type="entry name" value="TRANSLATION FACTOR"/>
    <property type="match status" value="1"/>
</dbReference>
<dbReference type="Pfam" id="PF22594">
    <property type="entry name" value="GTP-eEF1A_C"/>
    <property type="match status" value="1"/>
</dbReference>
<dbReference type="Pfam" id="PF00009">
    <property type="entry name" value="GTP_EFTU"/>
    <property type="match status" value="1"/>
</dbReference>
<dbReference type="PRINTS" id="PR00315">
    <property type="entry name" value="ELONGATNFCT"/>
</dbReference>
<dbReference type="SUPFAM" id="SSF50465">
    <property type="entry name" value="EF-Tu/eEF-1alpha/eIF2-gamma C-terminal domain"/>
    <property type="match status" value="1"/>
</dbReference>
<dbReference type="SUPFAM" id="SSF52540">
    <property type="entry name" value="P-loop containing nucleoside triphosphate hydrolases"/>
    <property type="match status" value="1"/>
</dbReference>
<dbReference type="SUPFAM" id="SSF50447">
    <property type="entry name" value="Translation proteins"/>
    <property type="match status" value="1"/>
</dbReference>
<dbReference type="PROSITE" id="PS00301">
    <property type="entry name" value="G_TR_1"/>
    <property type="match status" value="1"/>
</dbReference>
<dbReference type="PROSITE" id="PS51722">
    <property type="entry name" value="G_TR_2"/>
    <property type="match status" value="1"/>
</dbReference>
<gene>
    <name evidence="2" type="primary">cysN</name>
</gene>
<organism>
    <name type="scientific">Rhizobium tropici</name>
    <dbReference type="NCBI Taxonomy" id="398"/>
    <lineage>
        <taxon>Bacteria</taxon>
        <taxon>Pseudomonadati</taxon>
        <taxon>Pseudomonadota</taxon>
        <taxon>Alphaproteobacteria</taxon>
        <taxon>Hyphomicrobiales</taxon>
        <taxon>Rhizobiaceae</taxon>
        <taxon>Rhizobium/Agrobacterium group</taxon>
        <taxon>Rhizobium</taxon>
    </lineage>
</organism>
<reference key="1">
    <citation type="journal article" date="1998" name="DNA Seq.">
        <title>Isolation and sequencing of a second Rhizobium tropici CFN299 genetic locus that contains genes homologous to amino acid sulphate activation genes.</title>
        <authorList>
            <person name="Laeremans T."/>
            <person name="Martinez-Romero E."/>
            <person name="Vanderleyden J."/>
        </authorList>
    </citation>
    <scope>NUCLEOTIDE SEQUENCE [GENOMIC DNA]</scope>
    <source>
        <strain>CFN 299</strain>
    </source>
</reference>
<feature type="chain" id="PRO_0000091527" description="Sulfate adenylyltransferase subunit 1">
    <location>
        <begin position="1"/>
        <end position="494"/>
    </location>
</feature>
<feature type="domain" description="tr-type G">
    <location>
        <begin position="24"/>
        <end position="240"/>
    </location>
</feature>
<feature type="region of interest" description="G1" evidence="1">
    <location>
        <begin position="33"/>
        <end position="40"/>
    </location>
</feature>
<feature type="region of interest" description="G2" evidence="1">
    <location>
        <begin position="91"/>
        <end position="95"/>
    </location>
</feature>
<feature type="region of interest" description="G3" evidence="1">
    <location>
        <begin position="112"/>
        <end position="115"/>
    </location>
</feature>
<feature type="region of interest" description="G4" evidence="1">
    <location>
        <begin position="167"/>
        <end position="170"/>
    </location>
</feature>
<feature type="region of interest" description="G5" evidence="1">
    <location>
        <begin position="204"/>
        <end position="206"/>
    </location>
</feature>
<feature type="binding site" evidence="2">
    <location>
        <begin position="33"/>
        <end position="40"/>
    </location>
    <ligand>
        <name>GTP</name>
        <dbReference type="ChEBI" id="CHEBI:37565"/>
    </ligand>
</feature>
<feature type="binding site" evidence="2">
    <location>
        <begin position="112"/>
        <end position="116"/>
    </location>
    <ligand>
        <name>GTP</name>
        <dbReference type="ChEBI" id="CHEBI:37565"/>
    </ligand>
</feature>
<feature type="binding site" evidence="2">
    <location>
        <begin position="167"/>
        <end position="170"/>
    </location>
    <ligand>
        <name>GTP</name>
        <dbReference type="ChEBI" id="CHEBI:37565"/>
    </ligand>
</feature>
<comment type="function">
    <text evidence="2">With CysD forms the ATP sulfurylase (ATPS) that catalyzes the adenylation of sulfate producing adenosine 5'-phosphosulfate (APS) and diphosphate, the first enzymatic step in sulfur assimilation pathway. APS synthesis involves the formation of a high-energy phosphoric-sulfuric acid anhydride bond driven by GTP hydrolysis by CysN coupled to ATP hydrolysis by CysD.</text>
</comment>
<comment type="catalytic activity">
    <reaction evidence="2">
        <text>sulfate + ATP + H(+) = adenosine 5'-phosphosulfate + diphosphate</text>
        <dbReference type="Rhea" id="RHEA:18133"/>
        <dbReference type="ChEBI" id="CHEBI:15378"/>
        <dbReference type="ChEBI" id="CHEBI:16189"/>
        <dbReference type="ChEBI" id="CHEBI:30616"/>
        <dbReference type="ChEBI" id="CHEBI:33019"/>
        <dbReference type="ChEBI" id="CHEBI:58243"/>
        <dbReference type="EC" id="2.7.7.4"/>
    </reaction>
</comment>
<comment type="pathway">
    <text evidence="2">Sulfur metabolism; hydrogen sulfide biosynthesis; sulfite from sulfate: step 1/3.</text>
</comment>
<comment type="subunit">
    <text evidence="2">Heterodimer composed of CysD, the smaller subunit, and CysN.</text>
</comment>
<comment type="similarity">
    <text evidence="2 3">Belongs to the TRAFAC class translation factor GTPase superfamily. Classic translation factor GTPase family. CysN/NodQ subfamily.</text>
</comment>
<keyword id="KW-0067">ATP-binding</keyword>
<keyword id="KW-0342">GTP-binding</keyword>
<keyword id="KW-0547">Nucleotide-binding</keyword>
<keyword id="KW-0548">Nucleotidyltransferase</keyword>
<keyword id="KW-0808">Transferase</keyword>
<protein>
    <recommendedName>
        <fullName evidence="2">Sulfate adenylyltransferase subunit 1</fullName>
        <ecNumber evidence="2">2.7.7.4</ecNumber>
    </recommendedName>
    <alternativeName>
        <fullName evidence="2">ATP-sulfurylase large subunit</fullName>
    </alternativeName>
    <alternativeName>
        <fullName evidence="2">Sulfate adenylate transferase</fullName>
        <shortName evidence="2">SAT</shortName>
    </alternativeName>
</protein>